<keyword id="KW-0687">Ribonucleoprotein</keyword>
<keyword id="KW-0689">Ribosomal protein</keyword>
<keyword id="KW-0694">RNA-binding</keyword>
<keyword id="KW-0699">rRNA-binding</keyword>
<feature type="chain" id="PRO_1000086090" description="Small ribosomal subunit protein uS3">
    <location>
        <begin position="1"/>
        <end position="243"/>
    </location>
</feature>
<feature type="domain" description="KH type-2" evidence="1">
    <location>
        <begin position="38"/>
        <end position="106"/>
    </location>
</feature>
<feature type="region of interest" description="Disordered" evidence="2">
    <location>
        <begin position="217"/>
        <end position="243"/>
    </location>
</feature>
<evidence type="ECO:0000255" key="1">
    <source>
        <dbReference type="HAMAP-Rule" id="MF_01309"/>
    </source>
</evidence>
<evidence type="ECO:0000256" key="2">
    <source>
        <dbReference type="SAM" id="MobiDB-lite"/>
    </source>
</evidence>
<evidence type="ECO:0000305" key="3"/>
<comment type="function">
    <text evidence="1">Binds the lower part of the 30S subunit head. Binds mRNA in the 70S ribosome, positioning it for translation.</text>
</comment>
<comment type="subunit">
    <text evidence="1">Part of the 30S ribosomal subunit. Forms a tight complex with proteins S10 and S14.</text>
</comment>
<comment type="similarity">
    <text evidence="1">Belongs to the universal ribosomal protein uS3 family.</text>
</comment>
<protein>
    <recommendedName>
        <fullName evidence="1">Small ribosomal subunit protein uS3</fullName>
    </recommendedName>
    <alternativeName>
        <fullName evidence="3">30S ribosomal protein S3</fullName>
    </alternativeName>
</protein>
<reference key="1">
    <citation type="journal article" date="2007" name="PLoS Biol.">
        <title>Evolution of symbiotic bacteria in the distal human intestine.</title>
        <authorList>
            <person name="Xu J."/>
            <person name="Mahowald M.A."/>
            <person name="Ley R.E."/>
            <person name="Lozupone C.A."/>
            <person name="Hamady M."/>
            <person name="Martens E.C."/>
            <person name="Henrissat B."/>
            <person name="Coutinho P.M."/>
            <person name="Minx P."/>
            <person name="Latreille P."/>
            <person name="Cordum H."/>
            <person name="Van Brunt A."/>
            <person name="Kim K."/>
            <person name="Fulton R.S."/>
            <person name="Fulton L.A."/>
            <person name="Clifton S.W."/>
            <person name="Wilson R.K."/>
            <person name="Knight R.D."/>
            <person name="Gordon J.I."/>
        </authorList>
    </citation>
    <scope>NUCLEOTIDE SEQUENCE [LARGE SCALE GENOMIC DNA]</scope>
    <source>
        <strain>ATCC 8482 / DSM 1447 / JCM 5826 / CCUG 4940 / NBRC 14291 / NCTC 11154</strain>
    </source>
</reference>
<dbReference type="EMBL" id="CP000139">
    <property type="protein sequence ID" value="ABR38503.1"/>
    <property type="molecule type" value="Genomic_DNA"/>
</dbReference>
<dbReference type="RefSeq" id="WP_005844858.1">
    <property type="nucleotide sequence ID" value="NZ_JANSWM010000035.1"/>
</dbReference>
<dbReference type="SMR" id="A6KYI9"/>
<dbReference type="STRING" id="435590.BVU_0799"/>
<dbReference type="PaxDb" id="435590-BVU_0799"/>
<dbReference type="GeneID" id="93449017"/>
<dbReference type="KEGG" id="bvu:BVU_0799"/>
<dbReference type="eggNOG" id="COG0092">
    <property type="taxonomic scope" value="Bacteria"/>
</dbReference>
<dbReference type="HOGENOM" id="CLU_058591_0_2_10"/>
<dbReference type="BioCyc" id="BVUL435590:G1G59-841-MONOMER"/>
<dbReference type="Proteomes" id="UP000002861">
    <property type="component" value="Chromosome"/>
</dbReference>
<dbReference type="GO" id="GO:0022627">
    <property type="term" value="C:cytosolic small ribosomal subunit"/>
    <property type="evidence" value="ECO:0007669"/>
    <property type="project" value="TreeGrafter"/>
</dbReference>
<dbReference type="GO" id="GO:0003729">
    <property type="term" value="F:mRNA binding"/>
    <property type="evidence" value="ECO:0007669"/>
    <property type="project" value="UniProtKB-UniRule"/>
</dbReference>
<dbReference type="GO" id="GO:0019843">
    <property type="term" value="F:rRNA binding"/>
    <property type="evidence" value="ECO:0007669"/>
    <property type="project" value="UniProtKB-UniRule"/>
</dbReference>
<dbReference type="GO" id="GO:0003735">
    <property type="term" value="F:structural constituent of ribosome"/>
    <property type="evidence" value="ECO:0007669"/>
    <property type="project" value="InterPro"/>
</dbReference>
<dbReference type="GO" id="GO:0006412">
    <property type="term" value="P:translation"/>
    <property type="evidence" value="ECO:0007669"/>
    <property type="project" value="UniProtKB-UniRule"/>
</dbReference>
<dbReference type="CDD" id="cd02412">
    <property type="entry name" value="KH-II_30S_S3"/>
    <property type="match status" value="1"/>
</dbReference>
<dbReference type="FunFam" id="3.30.1140.32:FF:000007">
    <property type="entry name" value="30S ribosomal protein S3"/>
    <property type="match status" value="1"/>
</dbReference>
<dbReference type="FunFam" id="3.30.300.20:FF:000001">
    <property type="entry name" value="30S ribosomal protein S3"/>
    <property type="match status" value="1"/>
</dbReference>
<dbReference type="Gene3D" id="3.30.300.20">
    <property type="match status" value="1"/>
</dbReference>
<dbReference type="Gene3D" id="3.30.1140.32">
    <property type="entry name" value="Ribosomal protein S3, C-terminal domain"/>
    <property type="match status" value="1"/>
</dbReference>
<dbReference type="HAMAP" id="MF_01309_B">
    <property type="entry name" value="Ribosomal_uS3_B"/>
    <property type="match status" value="1"/>
</dbReference>
<dbReference type="InterPro" id="IPR004087">
    <property type="entry name" value="KH_dom"/>
</dbReference>
<dbReference type="InterPro" id="IPR015946">
    <property type="entry name" value="KH_dom-like_a/b"/>
</dbReference>
<dbReference type="InterPro" id="IPR004044">
    <property type="entry name" value="KH_dom_type_2"/>
</dbReference>
<dbReference type="InterPro" id="IPR009019">
    <property type="entry name" value="KH_sf_prok-type"/>
</dbReference>
<dbReference type="InterPro" id="IPR036419">
    <property type="entry name" value="Ribosomal_S3_C_sf"/>
</dbReference>
<dbReference type="InterPro" id="IPR005704">
    <property type="entry name" value="Ribosomal_uS3_bac-typ"/>
</dbReference>
<dbReference type="InterPro" id="IPR001351">
    <property type="entry name" value="Ribosomal_uS3_C"/>
</dbReference>
<dbReference type="InterPro" id="IPR018280">
    <property type="entry name" value="Ribosomal_uS3_CS"/>
</dbReference>
<dbReference type="NCBIfam" id="TIGR01009">
    <property type="entry name" value="rpsC_bact"/>
    <property type="match status" value="1"/>
</dbReference>
<dbReference type="PANTHER" id="PTHR11760">
    <property type="entry name" value="30S/40S RIBOSOMAL PROTEIN S3"/>
    <property type="match status" value="1"/>
</dbReference>
<dbReference type="PANTHER" id="PTHR11760:SF19">
    <property type="entry name" value="SMALL RIBOSOMAL SUBUNIT PROTEIN US3C"/>
    <property type="match status" value="1"/>
</dbReference>
<dbReference type="Pfam" id="PF07650">
    <property type="entry name" value="KH_2"/>
    <property type="match status" value="1"/>
</dbReference>
<dbReference type="Pfam" id="PF00189">
    <property type="entry name" value="Ribosomal_S3_C"/>
    <property type="match status" value="1"/>
</dbReference>
<dbReference type="SMART" id="SM00322">
    <property type="entry name" value="KH"/>
    <property type="match status" value="1"/>
</dbReference>
<dbReference type="SUPFAM" id="SSF54814">
    <property type="entry name" value="Prokaryotic type KH domain (KH-domain type II)"/>
    <property type="match status" value="1"/>
</dbReference>
<dbReference type="SUPFAM" id="SSF54821">
    <property type="entry name" value="Ribosomal protein S3 C-terminal domain"/>
    <property type="match status" value="1"/>
</dbReference>
<dbReference type="PROSITE" id="PS50823">
    <property type="entry name" value="KH_TYPE_2"/>
    <property type="match status" value="1"/>
</dbReference>
<dbReference type="PROSITE" id="PS00548">
    <property type="entry name" value="RIBOSOMAL_S3"/>
    <property type="match status" value="1"/>
</dbReference>
<accession>A6KYI9</accession>
<proteinExistence type="inferred from homology"/>
<gene>
    <name evidence="1" type="primary">rpsC</name>
    <name type="ordered locus">BVU_0799</name>
</gene>
<sequence>MGQKVNPISNRLGIIRGWDSNWYGGNDYGDALLEDSKIRKYLNARLAKASVSRIVIERTLKLVTITVCTARPGIIIGKGGQEVDKLKEELKKITDKDIQINIFEVKRPELDAVIVANNIARQVEGKIAYRRAIKMAIANTMRMGAEGIKVLISGRLNGAEMARSEMYKEGRTPLHTFRADIDYCHAEALTKVGLLGIKVWICRGEVYGKRELAPNFTQTKESGRGGNGNNNGGKNFKRKKNNR</sequence>
<organism>
    <name type="scientific">Phocaeicola vulgatus (strain ATCC 8482 / DSM 1447 / JCM 5826 / CCUG 4940 / NBRC 14291 / NCTC 11154)</name>
    <name type="common">Bacteroides vulgatus</name>
    <dbReference type="NCBI Taxonomy" id="435590"/>
    <lineage>
        <taxon>Bacteria</taxon>
        <taxon>Pseudomonadati</taxon>
        <taxon>Bacteroidota</taxon>
        <taxon>Bacteroidia</taxon>
        <taxon>Bacteroidales</taxon>
        <taxon>Bacteroidaceae</taxon>
        <taxon>Phocaeicola</taxon>
    </lineage>
</organism>
<name>RS3_PHOV8</name>